<organism>
    <name type="scientific">Sterkiella nova</name>
    <name type="common">Ciliate</name>
    <name type="synonym">Oxytricha nova</name>
    <dbReference type="NCBI Taxonomy" id="200597"/>
    <lineage>
        <taxon>Eukaryota</taxon>
        <taxon>Sar</taxon>
        <taxon>Alveolata</taxon>
        <taxon>Ciliophora</taxon>
        <taxon>Intramacronucleata</taxon>
        <taxon>Spirotrichea</taxon>
        <taxon>Stichotrichia</taxon>
        <taxon>Sporadotrichida</taxon>
        <taxon>Oxytrichidae</taxon>
        <taxon>Stylonychinae</taxon>
        <taxon>Sterkiella</taxon>
    </lineage>
</organism>
<sequence>MAGRGKVGKGYGKVGAKRHTKKSLKETIMGITKPAIRRLARRGGVKRISSLIYEETRNVLRSFLENVIRDSVTYTEHAKRKTVTALDVVYALKRQGRTLYGFGG</sequence>
<accession>P62790</accession>
<accession>P18836</accession>
<keyword id="KW-0158">Chromosome</keyword>
<keyword id="KW-0238">DNA-binding</keyword>
<keyword id="KW-0544">Nucleosome core</keyword>
<keyword id="KW-0539">Nucleus</keyword>
<protein>
    <recommendedName>
        <fullName>Histone H4</fullName>
    </recommendedName>
</protein>
<name>H4_STENO</name>
<proteinExistence type="inferred from homology"/>
<dbReference type="EMBL" id="M24411">
    <property type="protein sequence ID" value="AAA29395.1"/>
    <property type="molecule type" value="Genomic_DNA"/>
</dbReference>
<dbReference type="PIR" id="JS0154">
    <property type="entry name" value="JS0154"/>
</dbReference>
<dbReference type="SMR" id="P62790"/>
<dbReference type="GO" id="GO:0000786">
    <property type="term" value="C:nucleosome"/>
    <property type="evidence" value="ECO:0007669"/>
    <property type="project" value="UniProtKB-KW"/>
</dbReference>
<dbReference type="GO" id="GO:0005634">
    <property type="term" value="C:nucleus"/>
    <property type="evidence" value="ECO:0007669"/>
    <property type="project" value="UniProtKB-SubCell"/>
</dbReference>
<dbReference type="GO" id="GO:0003677">
    <property type="term" value="F:DNA binding"/>
    <property type="evidence" value="ECO:0007669"/>
    <property type="project" value="UniProtKB-KW"/>
</dbReference>
<dbReference type="GO" id="GO:0046982">
    <property type="term" value="F:protein heterodimerization activity"/>
    <property type="evidence" value="ECO:0007669"/>
    <property type="project" value="InterPro"/>
</dbReference>
<dbReference type="GO" id="GO:0030527">
    <property type="term" value="F:structural constituent of chromatin"/>
    <property type="evidence" value="ECO:0007669"/>
    <property type="project" value="InterPro"/>
</dbReference>
<dbReference type="CDD" id="cd22912">
    <property type="entry name" value="HFD_H4"/>
    <property type="match status" value="1"/>
</dbReference>
<dbReference type="FunFam" id="1.10.20.10:FF:000012">
    <property type="entry name" value="Histone H4"/>
    <property type="match status" value="1"/>
</dbReference>
<dbReference type="Gene3D" id="1.10.20.10">
    <property type="entry name" value="Histone, subunit A"/>
    <property type="match status" value="1"/>
</dbReference>
<dbReference type="InterPro" id="IPR035425">
    <property type="entry name" value="CENP-T/H4_C"/>
</dbReference>
<dbReference type="InterPro" id="IPR009072">
    <property type="entry name" value="Histone-fold"/>
</dbReference>
<dbReference type="InterPro" id="IPR001951">
    <property type="entry name" value="Histone_H4"/>
</dbReference>
<dbReference type="InterPro" id="IPR019809">
    <property type="entry name" value="Histone_H4_CS"/>
</dbReference>
<dbReference type="PANTHER" id="PTHR10484">
    <property type="entry name" value="HISTONE H4"/>
    <property type="match status" value="1"/>
</dbReference>
<dbReference type="Pfam" id="PF15511">
    <property type="entry name" value="CENP-T_C"/>
    <property type="match status" value="1"/>
</dbReference>
<dbReference type="PRINTS" id="PR00623">
    <property type="entry name" value="HISTONEH4"/>
</dbReference>
<dbReference type="SMART" id="SM00417">
    <property type="entry name" value="H4"/>
    <property type="match status" value="1"/>
</dbReference>
<dbReference type="SUPFAM" id="SSF47113">
    <property type="entry name" value="Histone-fold"/>
    <property type="match status" value="1"/>
</dbReference>
<dbReference type="PROSITE" id="PS00047">
    <property type="entry name" value="HISTONE_H4"/>
    <property type="match status" value="1"/>
</dbReference>
<evidence type="ECO:0000250" key="1"/>
<evidence type="ECO:0000256" key="2">
    <source>
        <dbReference type="SAM" id="MobiDB-lite"/>
    </source>
</evidence>
<evidence type="ECO:0000305" key="3"/>
<feature type="initiator methionine" description="Removed" evidence="1">
    <location>
        <position position="1"/>
    </location>
</feature>
<feature type="chain" id="PRO_0000158340" description="Histone H4">
    <location>
        <begin position="2"/>
        <end position="104"/>
    </location>
</feature>
<feature type="region of interest" description="Disordered" evidence="2">
    <location>
        <begin position="1"/>
        <end position="21"/>
    </location>
</feature>
<comment type="function">
    <text>Core component of nucleosome. Nucleosomes wrap and compact DNA into chromatin, limiting DNA accessibility to the cellular machineries which require DNA as a template. Histones thereby play a central role in transcription regulation, DNA repair, DNA replication and chromosomal stability. DNA accessibility is regulated via a complex set of post-translational modifications of histones, also called histone code, and nucleosome remodeling.</text>
</comment>
<comment type="subunit">
    <text>The nucleosome is a histone octamer containing two molecules each of H2A, H2B, H3 and H4 assembled in one H3-H4 heterotetramer and two H2A-H2B heterodimers. The octamer wraps approximately 147 bp of DNA.</text>
</comment>
<comment type="subcellular location">
    <subcellularLocation>
        <location evidence="1">Nucleus</location>
    </subcellularLocation>
    <subcellularLocation>
        <location evidence="1">Chromosome</location>
    </subcellularLocation>
</comment>
<comment type="similarity">
    <text evidence="3">Belongs to the histone H4 family.</text>
</comment>
<reference key="1">
    <citation type="journal article" date="1989" name="Gene">
        <title>Actin, tubulin and H4 histone genes in three species of hypotrichous ciliated protozoa.</title>
        <authorList>
            <person name="Harper D.S."/>
            <person name="Jahn C.L."/>
        </authorList>
    </citation>
    <scope>NUCLEOTIDE SEQUENCE [GENOMIC DNA]</scope>
</reference>